<proteinExistence type="inferred from homology"/>
<comment type="function">
    <text evidence="1">Stores iron in a soluble, non-toxic, readily available form. Important for iron homeostasis. Has ferroxidase activity. Iron is taken up in the ferrous form and deposited as ferric hydroxides after oxidation (By similarity).</text>
</comment>
<comment type="catalytic activity">
    <reaction>
        <text>4 Fe(2+) + O2 + 4 H(+) = 4 Fe(3+) + 2 H2O</text>
        <dbReference type="Rhea" id="RHEA:11148"/>
        <dbReference type="ChEBI" id="CHEBI:15377"/>
        <dbReference type="ChEBI" id="CHEBI:15378"/>
        <dbReference type="ChEBI" id="CHEBI:15379"/>
        <dbReference type="ChEBI" id="CHEBI:29033"/>
        <dbReference type="ChEBI" id="CHEBI:29034"/>
        <dbReference type="EC" id="1.16.3.1"/>
    </reaction>
</comment>
<comment type="subunit">
    <text evidence="1">Oligomer of 24 subunits. There are two types of subunits: L (light) chain and H (heavy) chain. The major chain can be light or heavy, depending on the species and tissue type. The functional molecule forms a roughly spherical shell with a diameter of 12 nm and contains a central cavity into which the insoluble mineral iron core is deposited (By similarity).</text>
</comment>
<comment type="subcellular location">
    <subcellularLocation>
        <location evidence="1">Plastid</location>
        <location evidence="1">Chloroplast</location>
    </subcellularLocation>
</comment>
<comment type="similarity">
    <text evidence="4">Belongs to the ferritin family.</text>
</comment>
<reference key="1">
    <citation type="journal article" date="2001" name="Chin. J. Biotechnol.">
        <title>The ferritin gene of apple trees (Malus xiaojinensis, Cheng et Jiang).</title>
        <authorList>
            <person name="Zhou Z.Q."/>
            <person name="Cheng M.H."/>
            <person name="Zhou Z.Y."/>
            <person name="Pei P."/>
            <person name="Yang W.G."/>
        </authorList>
    </citation>
    <scope>NUCLEOTIDE SEQUENCE [GENOMIC DNA]</scope>
</reference>
<accession>Q94FY2</accession>
<feature type="transit peptide" description="Chloroplast" evidence="2">
    <location>
        <begin position="1"/>
        <end position="49"/>
    </location>
</feature>
<feature type="chain" id="PRO_0000008861" description="Ferritin, chloroplastic">
    <location>
        <begin position="50"/>
        <end position="250"/>
    </location>
</feature>
<feature type="domain" description="Ferritin-like diiron" evidence="3">
    <location>
        <begin position="83"/>
        <end position="236"/>
    </location>
</feature>
<feature type="region of interest" description="Extension peptide (EP)">
    <location>
        <begin position="50"/>
        <end position="82"/>
    </location>
</feature>
<feature type="binding site" evidence="3">
    <location>
        <position position="100"/>
    </location>
    <ligand>
        <name>Fe cation</name>
        <dbReference type="ChEBI" id="CHEBI:24875"/>
        <label>1</label>
    </ligand>
</feature>
<feature type="binding site" evidence="3">
    <location>
        <position position="135"/>
    </location>
    <ligand>
        <name>Fe cation</name>
        <dbReference type="ChEBI" id="CHEBI:24875"/>
        <label>1</label>
    </ligand>
</feature>
<feature type="binding site" evidence="3">
    <location>
        <position position="135"/>
    </location>
    <ligand>
        <name>Fe cation</name>
        <dbReference type="ChEBI" id="CHEBI:24875"/>
        <label>2</label>
    </ligand>
</feature>
<feature type="binding site" evidence="3">
    <location>
        <position position="138"/>
    </location>
    <ligand>
        <name>Fe cation</name>
        <dbReference type="ChEBI" id="CHEBI:24875"/>
        <label>1</label>
    </ligand>
</feature>
<feature type="binding site" evidence="3">
    <location>
        <position position="184"/>
    </location>
    <ligand>
        <name>Fe cation</name>
        <dbReference type="ChEBI" id="CHEBI:24875"/>
        <label>2</label>
    </ligand>
</feature>
<feature type="binding site" evidence="3">
    <location>
        <position position="218"/>
    </location>
    <ligand>
        <name>Fe cation</name>
        <dbReference type="ChEBI" id="CHEBI:24875"/>
        <label>2</label>
    </ligand>
</feature>
<evidence type="ECO:0000250" key="1"/>
<evidence type="ECO:0000255" key="2"/>
<evidence type="ECO:0000255" key="3">
    <source>
        <dbReference type="PROSITE-ProRule" id="PRU00085"/>
    </source>
</evidence>
<evidence type="ECO:0000305" key="4"/>
<protein>
    <recommendedName>
        <fullName>Ferritin, chloroplastic</fullName>
        <ecNumber>1.16.3.1</ecNumber>
    </recommendedName>
    <alternativeName>
        <fullName>Apf1</fullName>
    </alternativeName>
</protein>
<dbReference type="EC" id="1.16.3.1"/>
<dbReference type="EMBL" id="AF315505">
    <property type="protein sequence ID" value="AAK83702.1"/>
    <property type="molecule type" value="Genomic_DNA"/>
</dbReference>
<dbReference type="SMR" id="Q94FY2"/>
<dbReference type="GO" id="GO:0009507">
    <property type="term" value="C:chloroplast"/>
    <property type="evidence" value="ECO:0007669"/>
    <property type="project" value="UniProtKB-SubCell"/>
</dbReference>
<dbReference type="GO" id="GO:0008199">
    <property type="term" value="F:ferric iron binding"/>
    <property type="evidence" value="ECO:0007669"/>
    <property type="project" value="InterPro"/>
</dbReference>
<dbReference type="GO" id="GO:0008198">
    <property type="term" value="F:ferrous iron binding"/>
    <property type="evidence" value="ECO:0007669"/>
    <property type="project" value="TreeGrafter"/>
</dbReference>
<dbReference type="GO" id="GO:0004322">
    <property type="term" value="F:ferroxidase activity"/>
    <property type="evidence" value="ECO:0007669"/>
    <property type="project" value="UniProtKB-EC"/>
</dbReference>
<dbReference type="GO" id="GO:0006879">
    <property type="term" value="P:intracellular iron ion homeostasis"/>
    <property type="evidence" value="ECO:0007669"/>
    <property type="project" value="UniProtKB-KW"/>
</dbReference>
<dbReference type="GO" id="GO:0006826">
    <property type="term" value="P:iron ion transport"/>
    <property type="evidence" value="ECO:0007669"/>
    <property type="project" value="InterPro"/>
</dbReference>
<dbReference type="CDD" id="cd01056">
    <property type="entry name" value="Euk_Ferritin"/>
    <property type="match status" value="1"/>
</dbReference>
<dbReference type="FunFam" id="1.20.1260.10:FF:000006">
    <property type="entry name" value="Ferritin"/>
    <property type="match status" value="1"/>
</dbReference>
<dbReference type="Gene3D" id="1.20.1260.10">
    <property type="match status" value="1"/>
</dbReference>
<dbReference type="InterPro" id="IPR001519">
    <property type="entry name" value="Ferritin"/>
</dbReference>
<dbReference type="InterPro" id="IPR012347">
    <property type="entry name" value="Ferritin-like"/>
</dbReference>
<dbReference type="InterPro" id="IPR009040">
    <property type="entry name" value="Ferritin-like_diiron"/>
</dbReference>
<dbReference type="InterPro" id="IPR009078">
    <property type="entry name" value="Ferritin-like_SF"/>
</dbReference>
<dbReference type="InterPro" id="IPR014034">
    <property type="entry name" value="Ferritin_CS"/>
</dbReference>
<dbReference type="InterPro" id="IPR008331">
    <property type="entry name" value="Ferritin_DPS_dom"/>
</dbReference>
<dbReference type="PANTHER" id="PTHR11431">
    <property type="entry name" value="FERRITIN"/>
    <property type="match status" value="1"/>
</dbReference>
<dbReference type="PANTHER" id="PTHR11431:SF90">
    <property type="entry name" value="FERRITIN-1, CHLOROPLASTIC"/>
    <property type="match status" value="1"/>
</dbReference>
<dbReference type="Pfam" id="PF00210">
    <property type="entry name" value="Ferritin"/>
    <property type="match status" value="1"/>
</dbReference>
<dbReference type="SUPFAM" id="SSF47240">
    <property type="entry name" value="Ferritin-like"/>
    <property type="match status" value="1"/>
</dbReference>
<dbReference type="PROSITE" id="PS00540">
    <property type="entry name" value="FERRITIN_1"/>
    <property type="match status" value="1"/>
</dbReference>
<dbReference type="PROSITE" id="PS00204">
    <property type="entry name" value="FERRITIN_2"/>
    <property type="match status" value="1"/>
</dbReference>
<dbReference type="PROSITE" id="PS50905">
    <property type="entry name" value="FERRITIN_LIKE"/>
    <property type="match status" value="1"/>
</dbReference>
<keyword id="KW-0150">Chloroplast</keyword>
<keyword id="KW-0408">Iron</keyword>
<keyword id="KW-0409">Iron storage</keyword>
<keyword id="KW-0479">Metal-binding</keyword>
<keyword id="KW-0560">Oxidoreductase</keyword>
<keyword id="KW-0934">Plastid</keyword>
<keyword id="KW-0809">Transit peptide</keyword>
<name>FRI_MALBX</name>
<sequence>MALAPSKVSTFSGFSPKPSVGGAQKNPTCSVSLSFLNEKLGSRNLRVCASTVPLTGVIFEPFEEVKKSELAVPTAPQVSLARQNYADECESAINEQINVEYNASYVYHSLFAYFDRDNVALKGFAKFFKESSEEEREHAEKLMKYQNTRGGRVVLHAIKNVPSEFEHVEKGDALYAMELALSLEKLVNEKLLNVHSVADRNNDPQMADFIESEFLSEQVESIKKISEYVAQLRRVGKGHGVWHFDQRLLD</sequence>
<organism>
    <name type="scientific">Malus baccata var. xiaojinensis</name>
    <name type="common">Apple</name>
    <name type="synonym">Malus xiaojinensis</name>
    <dbReference type="NCBI Taxonomy" id="141206"/>
    <lineage>
        <taxon>Eukaryota</taxon>
        <taxon>Viridiplantae</taxon>
        <taxon>Streptophyta</taxon>
        <taxon>Embryophyta</taxon>
        <taxon>Tracheophyta</taxon>
        <taxon>Spermatophyta</taxon>
        <taxon>Magnoliopsida</taxon>
        <taxon>eudicotyledons</taxon>
        <taxon>Gunneridae</taxon>
        <taxon>Pentapetalae</taxon>
        <taxon>rosids</taxon>
        <taxon>fabids</taxon>
        <taxon>Rosales</taxon>
        <taxon>Rosaceae</taxon>
        <taxon>Amygdaloideae</taxon>
        <taxon>Maleae</taxon>
        <taxon>Malus</taxon>
    </lineage>
</organism>